<name>PTH_RHOCS</name>
<dbReference type="EC" id="3.1.1.29" evidence="1"/>
<dbReference type="EMBL" id="CP000613">
    <property type="protein sequence ID" value="ACI99304.1"/>
    <property type="molecule type" value="Genomic_DNA"/>
</dbReference>
<dbReference type="RefSeq" id="WP_012567089.1">
    <property type="nucleotide sequence ID" value="NC_011420.2"/>
</dbReference>
<dbReference type="SMR" id="B6ITK3"/>
<dbReference type="STRING" id="414684.RC1_1908"/>
<dbReference type="KEGG" id="rce:RC1_1908"/>
<dbReference type="eggNOG" id="COG0193">
    <property type="taxonomic scope" value="Bacteria"/>
</dbReference>
<dbReference type="HOGENOM" id="CLU_062456_1_0_5"/>
<dbReference type="OrthoDB" id="9800507at2"/>
<dbReference type="Proteomes" id="UP000001591">
    <property type="component" value="Chromosome"/>
</dbReference>
<dbReference type="GO" id="GO:0005737">
    <property type="term" value="C:cytoplasm"/>
    <property type="evidence" value="ECO:0007669"/>
    <property type="project" value="UniProtKB-SubCell"/>
</dbReference>
<dbReference type="GO" id="GO:0004045">
    <property type="term" value="F:peptidyl-tRNA hydrolase activity"/>
    <property type="evidence" value="ECO:0007669"/>
    <property type="project" value="UniProtKB-UniRule"/>
</dbReference>
<dbReference type="GO" id="GO:0000049">
    <property type="term" value="F:tRNA binding"/>
    <property type="evidence" value="ECO:0007669"/>
    <property type="project" value="UniProtKB-UniRule"/>
</dbReference>
<dbReference type="GO" id="GO:0006515">
    <property type="term" value="P:protein quality control for misfolded or incompletely synthesized proteins"/>
    <property type="evidence" value="ECO:0007669"/>
    <property type="project" value="UniProtKB-UniRule"/>
</dbReference>
<dbReference type="GO" id="GO:0072344">
    <property type="term" value="P:rescue of stalled ribosome"/>
    <property type="evidence" value="ECO:0007669"/>
    <property type="project" value="UniProtKB-UniRule"/>
</dbReference>
<dbReference type="CDD" id="cd00462">
    <property type="entry name" value="PTH"/>
    <property type="match status" value="1"/>
</dbReference>
<dbReference type="FunFam" id="3.40.50.1470:FF:000001">
    <property type="entry name" value="Peptidyl-tRNA hydrolase"/>
    <property type="match status" value="1"/>
</dbReference>
<dbReference type="Gene3D" id="3.40.50.1470">
    <property type="entry name" value="Peptidyl-tRNA hydrolase"/>
    <property type="match status" value="1"/>
</dbReference>
<dbReference type="HAMAP" id="MF_00083">
    <property type="entry name" value="Pept_tRNA_hydro_bact"/>
    <property type="match status" value="1"/>
</dbReference>
<dbReference type="InterPro" id="IPR001328">
    <property type="entry name" value="Pept_tRNA_hydro"/>
</dbReference>
<dbReference type="InterPro" id="IPR018171">
    <property type="entry name" value="Pept_tRNA_hydro_CS"/>
</dbReference>
<dbReference type="InterPro" id="IPR036416">
    <property type="entry name" value="Pept_tRNA_hydro_sf"/>
</dbReference>
<dbReference type="NCBIfam" id="TIGR00447">
    <property type="entry name" value="pth"/>
    <property type="match status" value="1"/>
</dbReference>
<dbReference type="PANTHER" id="PTHR17224">
    <property type="entry name" value="PEPTIDYL-TRNA HYDROLASE"/>
    <property type="match status" value="1"/>
</dbReference>
<dbReference type="PANTHER" id="PTHR17224:SF1">
    <property type="entry name" value="PEPTIDYL-TRNA HYDROLASE"/>
    <property type="match status" value="1"/>
</dbReference>
<dbReference type="Pfam" id="PF01195">
    <property type="entry name" value="Pept_tRNA_hydro"/>
    <property type="match status" value="1"/>
</dbReference>
<dbReference type="SUPFAM" id="SSF53178">
    <property type="entry name" value="Peptidyl-tRNA hydrolase-like"/>
    <property type="match status" value="1"/>
</dbReference>
<dbReference type="PROSITE" id="PS01196">
    <property type="entry name" value="PEPT_TRNA_HYDROL_2"/>
    <property type="match status" value="1"/>
</dbReference>
<organism>
    <name type="scientific">Rhodospirillum centenum (strain ATCC 51521 / SW)</name>
    <dbReference type="NCBI Taxonomy" id="414684"/>
    <lineage>
        <taxon>Bacteria</taxon>
        <taxon>Pseudomonadati</taxon>
        <taxon>Pseudomonadota</taxon>
        <taxon>Alphaproteobacteria</taxon>
        <taxon>Rhodospirillales</taxon>
        <taxon>Rhodospirillaceae</taxon>
        <taxon>Rhodospirillum</taxon>
    </lineage>
</organism>
<protein>
    <recommendedName>
        <fullName evidence="1">Peptidyl-tRNA hydrolase</fullName>
        <shortName evidence="1">Pth</shortName>
        <ecNumber evidence="1">3.1.1.29</ecNumber>
    </recommendedName>
</protein>
<feature type="chain" id="PRO_1000092976" description="Peptidyl-tRNA hydrolase">
    <location>
        <begin position="1"/>
        <end position="227"/>
    </location>
</feature>
<feature type="region of interest" description="Disordered" evidence="2">
    <location>
        <begin position="182"/>
        <end position="227"/>
    </location>
</feature>
<feature type="compositionally biased region" description="Basic and acidic residues" evidence="2">
    <location>
        <begin position="198"/>
        <end position="215"/>
    </location>
</feature>
<feature type="active site" description="Proton acceptor" evidence="1">
    <location>
        <position position="19"/>
    </location>
</feature>
<feature type="binding site" evidence="1">
    <location>
        <position position="14"/>
    </location>
    <ligand>
        <name>tRNA</name>
        <dbReference type="ChEBI" id="CHEBI:17843"/>
    </ligand>
</feature>
<feature type="binding site" evidence="1">
    <location>
        <position position="64"/>
    </location>
    <ligand>
        <name>tRNA</name>
        <dbReference type="ChEBI" id="CHEBI:17843"/>
    </ligand>
</feature>
<feature type="binding site" evidence="1">
    <location>
        <position position="66"/>
    </location>
    <ligand>
        <name>tRNA</name>
        <dbReference type="ChEBI" id="CHEBI:17843"/>
    </ligand>
</feature>
<feature type="binding site" evidence="1">
    <location>
        <position position="112"/>
    </location>
    <ligand>
        <name>tRNA</name>
        <dbReference type="ChEBI" id="CHEBI:17843"/>
    </ligand>
</feature>
<feature type="site" description="Discriminates between blocked and unblocked aminoacyl-tRNA" evidence="1">
    <location>
        <position position="9"/>
    </location>
</feature>
<feature type="site" description="Stabilizes the basic form of H active site to accept a proton" evidence="1">
    <location>
        <position position="91"/>
    </location>
</feature>
<reference key="1">
    <citation type="submission" date="2007-03" db="EMBL/GenBank/DDBJ databases">
        <title>Genome sequence of Rhodospirillum centenum.</title>
        <authorList>
            <person name="Touchman J.W."/>
            <person name="Bauer C."/>
            <person name="Blankenship R.E."/>
        </authorList>
    </citation>
    <scope>NUCLEOTIDE SEQUENCE [LARGE SCALE GENOMIC DNA]</scope>
    <source>
        <strain>ATCC 51521 / SW</strain>
    </source>
</reference>
<gene>
    <name evidence="1" type="primary">pth</name>
    <name type="ordered locus">RC1_1908</name>
</gene>
<comment type="function">
    <text evidence="1">Hydrolyzes ribosome-free peptidyl-tRNAs (with 1 or more amino acids incorporated), which drop off the ribosome during protein synthesis, or as a result of ribosome stalling.</text>
</comment>
<comment type="function">
    <text evidence="1">Catalyzes the release of premature peptidyl moieties from peptidyl-tRNA molecules trapped in stalled 50S ribosomal subunits, and thus maintains levels of free tRNAs and 50S ribosomes.</text>
</comment>
<comment type="catalytic activity">
    <reaction evidence="1">
        <text>an N-acyl-L-alpha-aminoacyl-tRNA + H2O = an N-acyl-L-amino acid + a tRNA + H(+)</text>
        <dbReference type="Rhea" id="RHEA:54448"/>
        <dbReference type="Rhea" id="RHEA-COMP:10123"/>
        <dbReference type="Rhea" id="RHEA-COMP:13883"/>
        <dbReference type="ChEBI" id="CHEBI:15377"/>
        <dbReference type="ChEBI" id="CHEBI:15378"/>
        <dbReference type="ChEBI" id="CHEBI:59874"/>
        <dbReference type="ChEBI" id="CHEBI:78442"/>
        <dbReference type="ChEBI" id="CHEBI:138191"/>
        <dbReference type="EC" id="3.1.1.29"/>
    </reaction>
</comment>
<comment type="subunit">
    <text evidence="1">Monomer.</text>
</comment>
<comment type="subcellular location">
    <subcellularLocation>
        <location evidence="1">Cytoplasm</location>
    </subcellularLocation>
</comment>
<comment type="similarity">
    <text evidence="1">Belongs to the PTH family.</text>
</comment>
<proteinExistence type="inferred from homology"/>
<accession>B6ITK3</accession>
<keyword id="KW-0963">Cytoplasm</keyword>
<keyword id="KW-0378">Hydrolase</keyword>
<keyword id="KW-1185">Reference proteome</keyword>
<keyword id="KW-0694">RNA-binding</keyword>
<keyword id="KW-0820">tRNA-binding</keyword>
<evidence type="ECO:0000255" key="1">
    <source>
        <dbReference type="HAMAP-Rule" id="MF_00083"/>
    </source>
</evidence>
<evidence type="ECO:0000256" key="2">
    <source>
        <dbReference type="SAM" id="MobiDB-lite"/>
    </source>
</evidence>
<sequence length="227" mass="24669">MRLVVGLGNPGPEYERQRHNVGFMAVDLLHRRYGFGPWKRRFQGLTAEGSVAGEKVLLLKPATFMNLSGQAAGEAMRFYKITPDQVLVFHDELDLPPGRVRVKRGGGHGGHNGLRSLDDHVGKDYWRIRIGIGHPGSKERVTGWVLSNFAKAEEQWLEPLLDALVAEAPLLVAGEPEKYASRIALLTQPPKPPKPPKPPKDGAKETAGKGTEAETAKPPGPAAGRTG</sequence>